<gene>
    <name evidence="1" type="primary">rpsR</name>
    <name type="ordered locus">PEPE_0009</name>
</gene>
<reference key="1">
    <citation type="journal article" date="2006" name="Proc. Natl. Acad. Sci. U.S.A.">
        <title>Comparative genomics of the lactic acid bacteria.</title>
        <authorList>
            <person name="Makarova K.S."/>
            <person name="Slesarev A."/>
            <person name="Wolf Y.I."/>
            <person name="Sorokin A."/>
            <person name="Mirkin B."/>
            <person name="Koonin E.V."/>
            <person name="Pavlov A."/>
            <person name="Pavlova N."/>
            <person name="Karamychev V."/>
            <person name="Polouchine N."/>
            <person name="Shakhova V."/>
            <person name="Grigoriev I."/>
            <person name="Lou Y."/>
            <person name="Rohksar D."/>
            <person name="Lucas S."/>
            <person name="Huang K."/>
            <person name="Goodstein D.M."/>
            <person name="Hawkins T."/>
            <person name="Plengvidhya V."/>
            <person name="Welker D."/>
            <person name="Hughes J."/>
            <person name="Goh Y."/>
            <person name="Benson A."/>
            <person name="Baldwin K."/>
            <person name="Lee J.-H."/>
            <person name="Diaz-Muniz I."/>
            <person name="Dosti B."/>
            <person name="Smeianov V."/>
            <person name="Wechter W."/>
            <person name="Barabote R."/>
            <person name="Lorca G."/>
            <person name="Altermann E."/>
            <person name="Barrangou R."/>
            <person name="Ganesan B."/>
            <person name="Xie Y."/>
            <person name="Rawsthorne H."/>
            <person name="Tamir D."/>
            <person name="Parker C."/>
            <person name="Breidt F."/>
            <person name="Broadbent J.R."/>
            <person name="Hutkins R."/>
            <person name="O'Sullivan D."/>
            <person name="Steele J."/>
            <person name="Unlu G."/>
            <person name="Saier M.H. Jr."/>
            <person name="Klaenhammer T."/>
            <person name="Richardson P."/>
            <person name="Kozyavkin S."/>
            <person name="Weimer B.C."/>
            <person name="Mills D.A."/>
        </authorList>
    </citation>
    <scope>NUCLEOTIDE SEQUENCE [LARGE SCALE GENOMIC DNA]</scope>
    <source>
        <strain>ATCC 25745 / CCUG 21536 / LMG 10740 / 183-1w</strain>
    </source>
</reference>
<sequence>MAFQKRGGRRRRKVDYIAANHIEYIDYKDTELLKRFISERGKILPRRVSGTSAKNQRRLTIAIKRARIMGLLPFVAED</sequence>
<name>RS18_PEDPA</name>
<protein>
    <recommendedName>
        <fullName evidence="1">Small ribosomal subunit protein bS18</fullName>
    </recommendedName>
    <alternativeName>
        <fullName evidence="2">30S ribosomal protein S18</fullName>
    </alternativeName>
</protein>
<proteinExistence type="inferred from homology"/>
<comment type="function">
    <text evidence="1">Binds as a heterodimer with protein bS6 to the central domain of the 16S rRNA, where it helps stabilize the platform of the 30S subunit.</text>
</comment>
<comment type="subunit">
    <text evidence="1">Part of the 30S ribosomal subunit. Forms a tight heterodimer with protein bS6.</text>
</comment>
<comment type="similarity">
    <text evidence="1">Belongs to the bacterial ribosomal protein bS18 family.</text>
</comment>
<feature type="chain" id="PRO_1000003553" description="Small ribosomal subunit protein bS18">
    <location>
        <begin position="1"/>
        <end position="78"/>
    </location>
</feature>
<dbReference type="EMBL" id="CP000422">
    <property type="protein sequence ID" value="ABJ67120.1"/>
    <property type="molecule type" value="Genomic_DNA"/>
</dbReference>
<dbReference type="RefSeq" id="WP_002833867.1">
    <property type="nucleotide sequence ID" value="NC_008525.1"/>
</dbReference>
<dbReference type="SMR" id="Q03I52"/>
<dbReference type="STRING" id="278197.PEPE_0009"/>
<dbReference type="GeneID" id="33061422"/>
<dbReference type="KEGG" id="ppe:PEPE_0009"/>
<dbReference type="eggNOG" id="COG0238">
    <property type="taxonomic scope" value="Bacteria"/>
</dbReference>
<dbReference type="HOGENOM" id="CLU_148710_2_2_9"/>
<dbReference type="OrthoDB" id="9812008at2"/>
<dbReference type="Proteomes" id="UP000000773">
    <property type="component" value="Chromosome"/>
</dbReference>
<dbReference type="GO" id="GO:0022627">
    <property type="term" value="C:cytosolic small ribosomal subunit"/>
    <property type="evidence" value="ECO:0007669"/>
    <property type="project" value="TreeGrafter"/>
</dbReference>
<dbReference type="GO" id="GO:0070181">
    <property type="term" value="F:small ribosomal subunit rRNA binding"/>
    <property type="evidence" value="ECO:0007669"/>
    <property type="project" value="TreeGrafter"/>
</dbReference>
<dbReference type="GO" id="GO:0003735">
    <property type="term" value="F:structural constituent of ribosome"/>
    <property type="evidence" value="ECO:0007669"/>
    <property type="project" value="InterPro"/>
</dbReference>
<dbReference type="GO" id="GO:0006412">
    <property type="term" value="P:translation"/>
    <property type="evidence" value="ECO:0007669"/>
    <property type="project" value="UniProtKB-UniRule"/>
</dbReference>
<dbReference type="FunFam" id="4.10.640.10:FF:000003">
    <property type="entry name" value="30S ribosomal protein S18"/>
    <property type="match status" value="1"/>
</dbReference>
<dbReference type="Gene3D" id="4.10.640.10">
    <property type="entry name" value="Ribosomal protein S18"/>
    <property type="match status" value="1"/>
</dbReference>
<dbReference type="HAMAP" id="MF_00270">
    <property type="entry name" value="Ribosomal_bS18"/>
    <property type="match status" value="1"/>
</dbReference>
<dbReference type="InterPro" id="IPR001648">
    <property type="entry name" value="Ribosomal_bS18"/>
</dbReference>
<dbReference type="InterPro" id="IPR018275">
    <property type="entry name" value="Ribosomal_bS18_CS"/>
</dbReference>
<dbReference type="InterPro" id="IPR036870">
    <property type="entry name" value="Ribosomal_bS18_sf"/>
</dbReference>
<dbReference type="NCBIfam" id="TIGR00165">
    <property type="entry name" value="S18"/>
    <property type="match status" value="1"/>
</dbReference>
<dbReference type="PANTHER" id="PTHR13479">
    <property type="entry name" value="30S RIBOSOMAL PROTEIN S18"/>
    <property type="match status" value="1"/>
</dbReference>
<dbReference type="PANTHER" id="PTHR13479:SF40">
    <property type="entry name" value="SMALL RIBOSOMAL SUBUNIT PROTEIN BS18M"/>
    <property type="match status" value="1"/>
</dbReference>
<dbReference type="Pfam" id="PF01084">
    <property type="entry name" value="Ribosomal_S18"/>
    <property type="match status" value="1"/>
</dbReference>
<dbReference type="PRINTS" id="PR00974">
    <property type="entry name" value="RIBOSOMALS18"/>
</dbReference>
<dbReference type="SUPFAM" id="SSF46911">
    <property type="entry name" value="Ribosomal protein S18"/>
    <property type="match status" value="1"/>
</dbReference>
<dbReference type="PROSITE" id="PS00057">
    <property type="entry name" value="RIBOSOMAL_S18"/>
    <property type="match status" value="1"/>
</dbReference>
<accession>Q03I52</accession>
<organism>
    <name type="scientific">Pediococcus pentosaceus (strain ATCC 25745 / CCUG 21536 / LMG 10740 / 183-1w)</name>
    <dbReference type="NCBI Taxonomy" id="278197"/>
    <lineage>
        <taxon>Bacteria</taxon>
        <taxon>Bacillati</taxon>
        <taxon>Bacillota</taxon>
        <taxon>Bacilli</taxon>
        <taxon>Lactobacillales</taxon>
        <taxon>Lactobacillaceae</taxon>
        <taxon>Pediococcus</taxon>
    </lineage>
</organism>
<evidence type="ECO:0000255" key="1">
    <source>
        <dbReference type="HAMAP-Rule" id="MF_00270"/>
    </source>
</evidence>
<evidence type="ECO:0000305" key="2"/>
<keyword id="KW-0687">Ribonucleoprotein</keyword>
<keyword id="KW-0689">Ribosomal protein</keyword>
<keyword id="KW-0694">RNA-binding</keyword>
<keyword id="KW-0699">rRNA-binding</keyword>